<sequence>MGEYIVTKTLNNNVVVCTNNDQEVILIGKGIGFNKKEGMALNDQTITIEKIYKLESEQQKAHYKSLVEIADDNVLQVIIDSLNFISNTAMNVDSKQLVVSLTDHIIFAYKRLKQNQVISNPFVMETMQLYSDAYHIAKQVIDQLNAALDVHFPEDEIGFIALHIASNTEDLSMHEMTLINNVIKKGIDIIESDLVTTVDKESLQYQRFIRHVQFLIRRLRRKEYIHAQDDFVSMIKNHYPICYNTAYKILTMIQKQFDVNISESEIIYLTLHIHHFEERINQS</sequence>
<dbReference type="EMBL" id="BA000033">
    <property type="protein sequence ID" value="BAB95109.1"/>
    <property type="molecule type" value="Genomic_DNA"/>
</dbReference>
<dbReference type="RefSeq" id="WP_000505015.1">
    <property type="nucleotide sequence ID" value="NC_003923.1"/>
</dbReference>
<dbReference type="SMR" id="Q7A0Y7"/>
<dbReference type="KEGG" id="sam:MW1244"/>
<dbReference type="HOGENOM" id="CLU_078802_0_0_9"/>
<dbReference type="GO" id="GO:0003723">
    <property type="term" value="F:RNA binding"/>
    <property type="evidence" value="ECO:0007669"/>
    <property type="project" value="InterPro"/>
</dbReference>
<dbReference type="GO" id="GO:0045893">
    <property type="term" value="P:positive regulation of DNA-templated transcription"/>
    <property type="evidence" value="ECO:0007669"/>
    <property type="project" value="InterPro"/>
</dbReference>
<dbReference type="Gene3D" id="1.20.58.1950">
    <property type="match status" value="1"/>
</dbReference>
<dbReference type="Gene3D" id="1.20.890.100">
    <property type="match status" value="1"/>
</dbReference>
<dbReference type="Gene3D" id="2.30.24.10">
    <property type="entry name" value="CAT RNA-binding domain"/>
    <property type="match status" value="1"/>
</dbReference>
<dbReference type="Gene3D" id="1.10.1790.10">
    <property type="entry name" value="PRD domain"/>
    <property type="match status" value="1"/>
</dbReference>
<dbReference type="InterPro" id="IPR050661">
    <property type="entry name" value="BglG_antiterminators"/>
</dbReference>
<dbReference type="InterPro" id="IPR004341">
    <property type="entry name" value="CAT_RNA-bd_dom"/>
</dbReference>
<dbReference type="InterPro" id="IPR036650">
    <property type="entry name" value="CAT_RNA-bd_dom_sf"/>
</dbReference>
<dbReference type="InterPro" id="IPR011608">
    <property type="entry name" value="PRD"/>
</dbReference>
<dbReference type="InterPro" id="IPR036634">
    <property type="entry name" value="PRD_sf"/>
</dbReference>
<dbReference type="InterPro" id="IPR001550">
    <property type="entry name" value="Transcrpt_antitermin_CS"/>
</dbReference>
<dbReference type="NCBIfam" id="NF047357">
    <property type="entry name" value="antiterm_GlcT"/>
    <property type="match status" value="1"/>
</dbReference>
<dbReference type="PANTHER" id="PTHR30185">
    <property type="entry name" value="CRYPTIC BETA-GLUCOSIDE BGL OPERON ANTITERMINATOR"/>
    <property type="match status" value="1"/>
</dbReference>
<dbReference type="PANTHER" id="PTHR30185:SF16">
    <property type="entry name" value="PROTEIN GLCT"/>
    <property type="match status" value="1"/>
</dbReference>
<dbReference type="Pfam" id="PF03123">
    <property type="entry name" value="CAT_RBD"/>
    <property type="match status" value="1"/>
</dbReference>
<dbReference type="Pfam" id="PF00874">
    <property type="entry name" value="PRD"/>
    <property type="match status" value="2"/>
</dbReference>
<dbReference type="SMART" id="SM01061">
    <property type="entry name" value="CAT_RBD"/>
    <property type="match status" value="1"/>
</dbReference>
<dbReference type="SUPFAM" id="SSF63520">
    <property type="entry name" value="PTS-regulatory domain, PRD"/>
    <property type="match status" value="2"/>
</dbReference>
<dbReference type="SUPFAM" id="SSF50151">
    <property type="entry name" value="SacY-like RNA-binding domain"/>
    <property type="match status" value="1"/>
</dbReference>
<dbReference type="PROSITE" id="PS00654">
    <property type="entry name" value="PRD_1"/>
    <property type="match status" value="1"/>
</dbReference>
<dbReference type="PROSITE" id="PS51372">
    <property type="entry name" value="PRD_2"/>
    <property type="match status" value="2"/>
</dbReference>
<protein>
    <recommendedName>
        <fullName>Protein GlcT</fullName>
    </recommendedName>
</protein>
<keyword id="KW-0677">Repeat</keyword>
<proteinExistence type="inferred from homology"/>
<gene>
    <name type="primary">glcT</name>
    <name type="ordered locus">MW1244</name>
</gene>
<accession>Q7A0Y7</accession>
<evidence type="ECO:0000255" key="1">
    <source>
        <dbReference type="PROSITE-ProRule" id="PRU00704"/>
    </source>
</evidence>
<evidence type="ECO:0000305" key="2"/>
<reference key="1">
    <citation type="journal article" date="2002" name="Lancet">
        <title>Genome and virulence determinants of high virulence community-acquired MRSA.</title>
        <authorList>
            <person name="Baba T."/>
            <person name="Takeuchi F."/>
            <person name="Kuroda M."/>
            <person name="Yuzawa H."/>
            <person name="Aoki K."/>
            <person name="Oguchi A."/>
            <person name="Nagai Y."/>
            <person name="Iwama N."/>
            <person name="Asano K."/>
            <person name="Naimi T."/>
            <person name="Kuroda H."/>
            <person name="Cui L."/>
            <person name="Yamamoto K."/>
            <person name="Hiramatsu K."/>
        </authorList>
    </citation>
    <scope>NUCLEOTIDE SEQUENCE [LARGE SCALE GENOMIC DNA]</scope>
    <source>
        <strain>MW2</strain>
    </source>
</reference>
<comment type="similarity">
    <text evidence="2">Belongs to the transcriptional antiterminator BglG family. GlcT subfamily.</text>
</comment>
<organism>
    <name type="scientific">Staphylococcus aureus (strain MW2)</name>
    <dbReference type="NCBI Taxonomy" id="196620"/>
    <lineage>
        <taxon>Bacteria</taxon>
        <taxon>Bacillati</taxon>
        <taxon>Bacillota</taxon>
        <taxon>Bacilli</taxon>
        <taxon>Bacillales</taxon>
        <taxon>Staphylococcaceae</taxon>
        <taxon>Staphylococcus</taxon>
    </lineage>
</organism>
<name>GLCT_STAAW</name>
<feature type="chain" id="PRO_0000352613" description="Protein GlcT">
    <location>
        <begin position="1"/>
        <end position="283"/>
    </location>
</feature>
<feature type="domain" description="PRD 1" evidence="1">
    <location>
        <begin position="69"/>
        <end position="173"/>
    </location>
</feature>
<feature type="domain" description="PRD 2" evidence="1">
    <location>
        <begin position="174"/>
        <end position="283"/>
    </location>
</feature>